<feature type="chain" id="PRO_0000406335" description="Transcription factor GTE2">
    <location>
        <begin position="1"/>
        <end position="581"/>
    </location>
</feature>
<feature type="domain" description="Bromo" evidence="1">
    <location>
        <begin position="169"/>
        <end position="275"/>
    </location>
</feature>
<feature type="domain" description="NET" evidence="2">
    <location>
        <begin position="389"/>
        <end position="470"/>
    </location>
</feature>
<feature type="region of interest" description="Disordered" evidence="3">
    <location>
        <begin position="130"/>
        <end position="153"/>
    </location>
</feature>
<feature type="region of interest" description="Disordered" evidence="3">
    <location>
        <begin position="329"/>
        <end position="399"/>
    </location>
</feature>
<feature type="region of interest" description="Disordered" evidence="3">
    <location>
        <begin position="470"/>
        <end position="581"/>
    </location>
</feature>
<feature type="compositionally biased region" description="Basic residues" evidence="3">
    <location>
        <begin position="131"/>
        <end position="145"/>
    </location>
</feature>
<feature type="compositionally biased region" description="Pro residues" evidence="3">
    <location>
        <begin position="346"/>
        <end position="365"/>
    </location>
</feature>
<feature type="compositionally biased region" description="Basic and acidic residues" evidence="3">
    <location>
        <begin position="390"/>
        <end position="399"/>
    </location>
</feature>
<feature type="compositionally biased region" description="Basic and acidic residues" evidence="3">
    <location>
        <begin position="493"/>
        <end position="503"/>
    </location>
</feature>
<feature type="compositionally biased region" description="Acidic residues" evidence="3">
    <location>
        <begin position="504"/>
        <end position="517"/>
    </location>
</feature>
<feature type="compositionally biased region" description="Low complexity" evidence="3">
    <location>
        <begin position="530"/>
        <end position="564"/>
    </location>
</feature>
<feature type="sequence conflict" description="In Ref. 3; BAC42593." evidence="4" ref="3">
    <original>AEK</original>
    <variation>LSE</variation>
    <location>
        <begin position="494"/>
        <end position="496"/>
    </location>
</feature>
<dbReference type="EMBL" id="AL353995">
    <property type="protein sequence ID" value="CAB89388.1"/>
    <property type="status" value="ALT_SEQ"/>
    <property type="molecule type" value="Genomic_DNA"/>
</dbReference>
<dbReference type="EMBL" id="CP002688">
    <property type="protein sequence ID" value="AED91562.2"/>
    <property type="molecule type" value="Genomic_DNA"/>
</dbReference>
<dbReference type="EMBL" id="AK117955">
    <property type="protein sequence ID" value="BAC42593.1"/>
    <property type="status" value="ALT_SEQ"/>
    <property type="molecule type" value="mRNA"/>
</dbReference>
<dbReference type="PIR" id="T49984">
    <property type="entry name" value="T49984"/>
</dbReference>
<dbReference type="RefSeq" id="NP_196617.2">
    <property type="nucleotide sequence ID" value="NM_121093.2"/>
</dbReference>
<dbReference type="SMR" id="Q9LXA7"/>
<dbReference type="BioGRID" id="16198">
    <property type="interactions" value="2"/>
</dbReference>
<dbReference type="FunCoup" id="Q9LXA7">
    <property type="interactions" value="2190"/>
</dbReference>
<dbReference type="STRING" id="3702.Q9LXA7"/>
<dbReference type="iPTMnet" id="Q9LXA7"/>
<dbReference type="PaxDb" id="3702-AT5G10550.1"/>
<dbReference type="ProteomicsDB" id="230167"/>
<dbReference type="EnsemblPlants" id="AT5G10550.1">
    <property type="protein sequence ID" value="AT5G10550.1"/>
    <property type="gene ID" value="AT5G10550"/>
</dbReference>
<dbReference type="GeneID" id="830920"/>
<dbReference type="Gramene" id="AT5G10550.1">
    <property type="protein sequence ID" value="AT5G10550.1"/>
    <property type="gene ID" value="AT5G10550"/>
</dbReference>
<dbReference type="KEGG" id="ath:AT5G10550"/>
<dbReference type="Araport" id="AT5G10550"/>
<dbReference type="TAIR" id="AT5G10550">
    <property type="gene designation" value="GTE2"/>
</dbReference>
<dbReference type="eggNOG" id="KOG1474">
    <property type="taxonomic scope" value="Eukaryota"/>
</dbReference>
<dbReference type="HOGENOM" id="CLU_009580_3_0_1"/>
<dbReference type="InParanoid" id="Q9LXA7"/>
<dbReference type="OMA" id="RKGPEQI"/>
<dbReference type="OrthoDB" id="21449at2759"/>
<dbReference type="PhylomeDB" id="Q9LXA7"/>
<dbReference type="PRO" id="PR:Q9LXA7"/>
<dbReference type="Proteomes" id="UP000006548">
    <property type="component" value="Chromosome 5"/>
</dbReference>
<dbReference type="ExpressionAtlas" id="Q9LXA7">
    <property type="expression patterns" value="baseline and differential"/>
</dbReference>
<dbReference type="GO" id="GO:0005634">
    <property type="term" value="C:nucleus"/>
    <property type="evidence" value="ECO:0007669"/>
    <property type="project" value="UniProtKB-SubCell"/>
</dbReference>
<dbReference type="CDD" id="cd05506">
    <property type="entry name" value="Bromo_plant1"/>
    <property type="match status" value="1"/>
</dbReference>
<dbReference type="Gene3D" id="1.20.1270.220">
    <property type="match status" value="1"/>
</dbReference>
<dbReference type="Gene3D" id="1.20.920.10">
    <property type="entry name" value="Bromodomain-like"/>
    <property type="match status" value="1"/>
</dbReference>
<dbReference type="InterPro" id="IPR001487">
    <property type="entry name" value="Bromodomain"/>
</dbReference>
<dbReference type="InterPro" id="IPR036427">
    <property type="entry name" value="Bromodomain-like_sf"/>
</dbReference>
<dbReference type="InterPro" id="IPR037377">
    <property type="entry name" value="GTE_bromo"/>
</dbReference>
<dbReference type="InterPro" id="IPR027353">
    <property type="entry name" value="NET_dom"/>
</dbReference>
<dbReference type="InterPro" id="IPR038336">
    <property type="entry name" value="NET_sf"/>
</dbReference>
<dbReference type="PANTHER" id="PTHR45926">
    <property type="entry name" value="OSJNBA0053K19.4 PROTEIN"/>
    <property type="match status" value="1"/>
</dbReference>
<dbReference type="Pfam" id="PF17035">
    <property type="entry name" value="BET"/>
    <property type="match status" value="1"/>
</dbReference>
<dbReference type="Pfam" id="PF00439">
    <property type="entry name" value="Bromodomain"/>
    <property type="match status" value="1"/>
</dbReference>
<dbReference type="PRINTS" id="PR00503">
    <property type="entry name" value="BROMODOMAIN"/>
</dbReference>
<dbReference type="SMART" id="SM00297">
    <property type="entry name" value="BROMO"/>
    <property type="match status" value="1"/>
</dbReference>
<dbReference type="SUPFAM" id="SSF47370">
    <property type="entry name" value="Bromodomain"/>
    <property type="match status" value="1"/>
</dbReference>
<dbReference type="PROSITE" id="PS50014">
    <property type="entry name" value="BROMODOMAIN_2"/>
    <property type="match status" value="1"/>
</dbReference>
<dbReference type="PROSITE" id="PS51525">
    <property type="entry name" value="NET"/>
    <property type="match status" value="1"/>
</dbReference>
<gene>
    <name type="primary">GTE2</name>
    <name type="ordered locus">At5g10550</name>
    <name type="ORF">F12B17_100</name>
</gene>
<protein>
    <recommendedName>
        <fullName>Transcription factor GTE2</fullName>
    </recommendedName>
    <alternativeName>
        <fullName>Bromodomain-containing protein GTE2</fullName>
    </alternativeName>
    <alternativeName>
        <fullName>Protein GLOBAL TRANSCRIPTION FACTOR GROUP E2</fullName>
    </alternativeName>
</protein>
<evidence type="ECO:0000255" key="1">
    <source>
        <dbReference type="PROSITE-ProRule" id="PRU00035"/>
    </source>
</evidence>
<evidence type="ECO:0000255" key="2">
    <source>
        <dbReference type="PROSITE-ProRule" id="PRU00857"/>
    </source>
</evidence>
<evidence type="ECO:0000256" key="3">
    <source>
        <dbReference type="SAM" id="MobiDB-lite"/>
    </source>
</evidence>
<evidence type="ECO:0000305" key="4"/>
<keyword id="KW-0103">Bromodomain</keyword>
<keyword id="KW-0539">Nucleus</keyword>
<keyword id="KW-1185">Reference proteome</keyword>
<keyword id="KW-0804">Transcription</keyword>
<keyword id="KW-0805">Transcription regulation</keyword>
<accession>Q9LXA7</accession>
<accession>F4KI72</accession>
<accession>Q8GXZ1</accession>
<name>GTE2_ARATH</name>
<comment type="subcellular location">
    <subcellularLocation>
        <location evidence="4">Nucleus</location>
    </subcellularLocation>
</comment>
<comment type="domain">
    <text>The NET domain could serve as an interface to localize different proteins or complexes to chromatin.</text>
</comment>
<comment type="sequence caution" evidence="4">
    <conflict type="erroneous translation">
        <sequence resource="EMBL-CDS" id="BAC42593"/>
    </conflict>
    <text>Wrong choice of frame.</text>
</comment>
<comment type="sequence caution" evidence="4">
    <conflict type="erroneous gene model prediction">
        <sequence resource="EMBL-CDS" id="CAB89388"/>
    </conflict>
</comment>
<reference key="1">
    <citation type="journal article" date="2000" name="Nature">
        <title>Sequence and analysis of chromosome 5 of the plant Arabidopsis thaliana.</title>
        <authorList>
            <person name="Tabata S."/>
            <person name="Kaneko T."/>
            <person name="Nakamura Y."/>
            <person name="Kotani H."/>
            <person name="Kato T."/>
            <person name="Asamizu E."/>
            <person name="Miyajima N."/>
            <person name="Sasamoto S."/>
            <person name="Kimura T."/>
            <person name="Hosouchi T."/>
            <person name="Kawashima K."/>
            <person name="Kohara M."/>
            <person name="Matsumoto M."/>
            <person name="Matsuno A."/>
            <person name="Muraki A."/>
            <person name="Nakayama S."/>
            <person name="Nakazaki N."/>
            <person name="Naruo K."/>
            <person name="Okumura S."/>
            <person name="Shinpo S."/>
            <person name="Takeuchi C."/>
            <person name="Wada T."/>
            <person name="Watanabe A."/>
            <person name="Yamada M."/>
            <person name="Yasuda M."/>
            <person name="Sato S."/>
            <person name="de la Bastide M."/>
            <person name="Huang E."/>
            <person name="Spiegel L."/>
            <person name="Gnoj L."/>
            <person name="O'Shaughnessy A."/>
            <person name="Preston R."/>
            <person name="Habermann K."/>
            <person name="Murray J."/>
            <person name="Johnson D."/>
            <person name="Rohlfing T."/>
            <person name="Nelson J."/>
            <person name="Stoneking T."/>
            <person name="Pepin K."/>
            <person name="Spieth J."/>
            <person name="Sekhon M."/>
            <person name="Armstrong J."/>
            <person name="Becker M."/>
            <person name="Belter E."/>
            <person name="Cordum H."/>
            <person name="Cordes M."/>
            <person name="Courtney L."/>
            <person name="Courtney W."/>
            <person name="Dante M."/>
            <person name="Du H."/>
            <person name="Edwards J."/>
            <person name="Fryman J."/>
            <person name="Haakensen B."/>
            <person name="Lamar E."/>
            <person name="Latreille P."/>
            <person name="Leonard S."/>
            <person name="Meyer R."/>
            <person name="Mulvaney E."/>
            <person name="Ozersky P."/>
            <person name="Riley A."/>
            <person name="Strowmatt C."/>
            <person name="Wagner-McPherson C."/>
            <person name="Wollam A."/>
            <person name="Yoakum M."/>
            <person name="Bell M."/>
            <person name="Dedhia N."/>
            <person name="Parnell L."/>
            <person name="Shah R."/>
            <person name="Rodriguez M."/>
            <person name="Hoon See L."/>
            <person name="Vil D."/>
            <person name="Baker J."/>
            <person name="Kirchoff K."/>
            <person name="Toth K."/>
            <person name="King L."/>
            <person name="Bahret A."/>
            <person name="Miller B."/>
            <person name="Marra M.A."/>
            <person name="Martienssen R."/>
            <person name="McCombie W.R."/>
            <person name="Wilson R.K."/>
            <person name="Murphy G."/>
            <person name="Bancroft I."/>
            <person name="Volckaert G."/>
            <person name="Wambutt R."/>
            <person name="Duesterhoeft A."/>
            <person name="Stiekema W."/>
            <person name="Pohl T."/>
            <person name="Entian K.-D."/>
            <person name="Terryn N."/>
            <person name="Hartley N."/>
            <person name="Bent E."/>
            <person name="Johnson S."/>
            <person name="Langham S.-A."/>
            <person name="McCullagh B."/>
            <person name="Robben J."/>
            <person name="Grymonprez B."/>
            <person name="Zimmermann W."/>
            <person name="Ramsperger U."/>
            <person name="Wedler H."/>
            <person name="Balke K."/>
            <person name="Wedler E."/>
            <person name="Peters S."/>
            <person name="van Staveren M."/>
            <person name="Dirkse W."/>
            <person name="Mooijman P."/>
            <person name="Klein Lankhorst R."/>
            <person name="Weitzenegger T."/>
            <person name="Bothe G."/>
            <person name="Rose M."/>
            <person name="Hauf J."/>
            <person name="Berneiser S."/>
            <person name="Hempel S."/>
            <person name="Feldpausch M."/>
            <person name="Lamberth S."/>
            <person name="Villarroel R."/>
            <person name="Gielen J."/>
            <person name="Ardiles W."/>
            <person name="Bents O."/>
            <person name="Lemcke K."/>
            <person name="Kolesov G."/>
            <person name="Mayer K.F.X."/>
            <person name="Rudd S."/>
            <person name="Schoof H."/>
            <person name="Schueller C."/>
            <person name="Zaccaria P."/>
            <person name="Mewes H.-W."/>
            <person name="Bevan M."/>
            <person name="Fransz P.F."/>
        </authorList>
    </citation>
    <scope>NUCLEOTIDE SEQUENCE [LARGE SCALE GENOMIC DNA]</scope>
    <source>
        <strain>cv. Columbia</strain>
    </source>
</reference>
<reference key="2">
    <citation type="journal article" date="2017" name="Plant J.">
        <title>Araport11: a complete reannotation of the Arabidopsis thaliana reference genome.</title>
        <authorList>
            <person name="Cheng C.Y."/>
            <person name="Krishnakumar V."/>
            <person name="Chan A.P."/>
            <person name="Thibaud-Nissen F."/>
            <person name="Schobel S."/>
            <person name="Town C.D."/>
        </authorList>
    </citation>
    <scope>GENOME REANNOTATION</scope>
    <source>
        <strain>cv. Columbia</strain>
    </source>
</reference>
<reference key="3">
    <citation type="journal article" date="2002" name="Science">
        <title>Functional annotation of a full-length Arabidopsis cDNA collection.</title>
        <authorList>
            <person name="Seki M."/>
            <person name="Narusaka M."/>
            <person name="Kamiya A."/>
            <person name="Ishida J."/>
            <person name="Satou M."/>
            <person name="Sakurai T."/>
            <person name="Nakajima M."/>
            <person name="Enju A."/>
            <person name="Akiyama K."/>
            <person name="Oono Y."/>
            <person name="Muramatsu M."/>
            <person name="Hayashizaki Y."/>
            <person name="Kawai J."/>
            <person name="Carninci P."/>
            <person name="Itoh M."/>
            <person name="Ishii Y."/>
            <person name="Arakawa T."/>
            <person name="Shibata K."/>
            <person name="Shinagawa A."/>
            <person name="Shinozaki K."/>
        </authorList>
    </citation>
    <scope>NUCLEOTIDE SEQUENCE [LARGE SCALE MRNA] OF 493-581</scope>
    <source>
        <strain>cv. Columbia</strain>
    </source>
</reference>
<reference key="4">
    <citation type="journal article" date="2002" name="Nucleic Acids Res.">
        <title>Analysis of histone acetyltransferase and histone deacetylase families of Arabidopsis thaliana suggests functional diversification of chromatin modification among multicellular eukaryotes.</title>
        <authorList>
            <person name="Pandey R."/>
            <person name="Mueller A."/>
            <person name="Napoli C.A."/>
            <person name="Selinger D.A."/>
            <person name="Pikaard C.S."/>
            <person name="Richards E.J."/>
            <person name="Bender J."/>
            <person name="Mount D.W."/>
            <person name="Jorgensen R.A."/>
        </authorList>
    </citation>
    <scope>GENE FAMILY</scope>
    <scope>NOMENCLATURE</scope>
</reference>
<proteinExistence type="evidence at transcript level"/>
<sequence length="581" mass="64103">MAPAVLANLNEPLFLGQCGAVFMRKYTNQPLSGDINNPLFNPNPNPNSISAYGNNSSKHFDDSSAYGDYVSFDLDGYTSNQLRELKKRLNSELEEVRFLRERIESGTFVSGSVYTTQARSFAGETNDVGVKKTKTKKKKIGHGQKRSNPFATDEPSLKRHVALDLMSEKVLKSMMTTCGQILVKLMKHKWSWVFLNPVDVVGLGLHDYHRIVDKPMDLGTVKMNLEKGLYRSPIDFASDVRLTFTNAMSYNPKGQDVYLMAEKLLSQFDVWFNPTLKRFEAQEVKVMGSSSRPGPEDNQRVWNQNNVAENARKGPEQISIAKKLDSVKPLLPTLPPPPVIEITRDPSPPPSPVQPPPPPSPPPQPVNQVEASLEVRETNKGRKGKLPKPKAKDPNKREMTMDEKGKLGVNLQELPPEKLGQLIQILRKRTRDLPQDGDEIELDIEALDNETLWELDRFVTNYRKMASKIKRQGFIQNVSTPPRNMPPVTEMGSAEKRGRKGGEAGEEDVDIGEDIPVEDYPSVEIERDGTAAAASGGSSSSGSFSSSGSSSSSDSESGSSSGSDSDADSVQSPFVEAKEAP</sequence>
<organism>
    <name type="scientific">Arabidopsis thaliana</name>
    <name type="common">Mouse-ear cress</name>
    <dbReference type="NCBI Taxonomy" id="3702"/>
    <lineage>
        <taxon>Eukaryota</taxon>
        <taxon>Viridiplantae</taxon>
        <taxon>Streptophyta</taxon>
        <taxon>Embryophyta</taxon>
        <taxon>Tracheophyta</taxon>
        <taxon>Spermatophyta</taxon>
        <taxon>Magnoliopsida</taxon>
        <taxon>eudicotyledons</taxon>
        <taxon>Gunneridae</taxon>
        <taxon>Pentapetalae</taxon>
        <taxon>rosids</taxon>
        <taxon>malvids</taxon>
        <taxon>Brassicales</taxon>
        <taxon>Brassicaceae</taxon>
        <taxon>Camelineae</taxon>
        <taxon>Arabidopsis</taxon>
    </lineage>
</organism>